<sequence length="346" mass="37780">MKKLISGIIAVAMALSLAACQKETKVISLSGKTMGTTYHVKYLDDGSITATSEKTHEEIEAILKDVNAKMSTYKKDSELSRFNQNTQVNTPIEISADFAKVLAEAIRLNKVTEGALDVTVGPVVNLWGFGPEKRPEKQPTPEQLAERQAWVGIDKITLDTNKEKATLSKALPQVYVDLSSIAKGFGVDQVAEKLEQLNAQNYMVEIGGEIRAKGKNIEGKPWQIAIEKPTTTGERAVEAVIGLNNMGMASSGDYRIYFEENGKRFAHEIDPKTGYPIQHHLASITVLAPTSMTADGLSTGLFVLGEDKALEVAEKNNLAVYLIIRTDNGFVTKSSSAFKKLTETKE</sequence>
<dbReference type="EC" id="2.7.1.180" evidence="1"/>
<dbReference type="EMBL" id="L42023">
    <property type="protein sequence ID" value="AAC21842.1"/>
    <property type="molecule type" value="Genomic_DNA"/>
</dbReference>
<dbReference type="PIR" id="C64144">
    <property type="entry name" value="C64144"/>
</dbReference>
<dbReference type="RefSeq" id="NP_438340.1">
    <property type="nucleotide sequence ID" value="NC_000907.1"/>
</dbReference>
<dbReference type="SMR" id="P44550"/>
<dbReference type="STRING" id="71421.HI_0172"/>
<dbReference type="EnsemblBacteria" id="AAC21842">
    <property type="protein sequence ID" value="AAC21842"/>
    <property type="gene ID" value="HI_0172"/>
</dbReference>
<dbReference type="KEGG" id="hin:HI_0172"/>
<dbReference type="PATRIC" id="fig|71421.8.peg.176"/>
<dbReference type="eggNOG" id="COG1477">
    <property type="taxonomic scope" value="Bacteria"/>
</dbReference>
<dbReference type="HOGENOM" id="CLU_044403_0_0_6"/>
<dbReference type="OrthoDB" id="9778595at2"/>
<dbReference type="PhylomeDB" id="P44550"/>
<dbReference type="BioCyc" id="HINF71421:G1GJ1-182-MONOMER"/>
<dbReference type="Proteomes" id="UP000000579">
    <property type="component" value="Chromosome"/>
</dbReference>
<dbReference type="GO" id="GO:0005886">
    <property type="term" value="C:plasma membrane"/>
    <property type="evidence" value="ECO:0007669"/>
    <property type="project" value="UniProtKB-SubCell"/>
</dbReference>
<dbReference type="GO" id="GO:0046872">
    <property type="term" value="F:metal ion binding"/>
    <property type="evidence" value="ECO:0007669"/>
    <property type="project" value="UniProtKB-KW"/>
</dbReference>
<dbReference type="GO" id="GO:0016740">
    <property type="term" value="F:transferase activity"/>
    <property type="evidence" value="ECO:0000318"/>
    <property type="project" value="GO_Central"/>
</dbReference>
<dbReference type="FunFam" id="3.10.520.10:FF:000001">
    <property type="entry name" value="FAD:protein FMN transferase"/>
    <property type="match status" value="1"/>
</dbReference>
<dbReference type="Gene3D" id="3.10.520.10">
    <property type="entry name" value="ApbE-like domains"/>
    <property type="match status" value="1"/>
</dbReference>
<dbReference type="InterPro" id="IPR024932">
    <property type="entry name" value="ApbE"/>
</dbReference>
<dbReference type="InterPro" id="IPR003374">
    <property type="entry name" value="ApbE-like_sf"/>
</dbReference>
<dbReference type="PANTHER" id="PTHR30040:SF2">
    <property type="entry name" value="FAD:PROTEIN FMN TRANSFERASE"/>
    <property type="match status" value="1"/>
</dbReference>
<dbReference type="PANTHER" id="PTHR30040">
    <property type="entry name" value="THIAMINE BIOSYNTHESIS LIPOPROTEIN APBE"/>
    <property type="match status" value="1"/>
</dbReference>
<dbReference type="Pfam" id="PF02424">
    <property type="entry name" value="ApbE"/>
    <property type="match status" value="1"/>
</dbReference>
<dbReference type="PIRSF" id="PIRSF006268">
    <property type="entry name" value="ApbE"/>
    <property type="match status" value="1"/>
</dbReference>
<dbReference type="SUPFAM" id="SSF143631">
    <property type="entry name" value="ApbE-like"/>
    <property type="match status" value="1"/>
</dbReference>
<dbReference type="PROSITE" id="PS51257">
    <property type="entry name" value="PROKAR_LIPOPROTEIN"/>
    <property type="match status" value="1"/>
</dbReference>
<keyword id="KW-0997">Cell inner membrane</keyword>
<keyword id="KW-1003">Cell membrane</keyword>
<keyword id="KW-0274">FAD</keyword>
<keyword id="KW-0285">Flavoprotein</keyword>
<keyword id="KW-0449">Lipoprotein</keyword>
<keyword id="KW-0460">Magnesium</keyword>
<keyword id="KW-0472">Membrane</keyword>
<keyword id="KW-0479">Metal-binding</keyword>
<keyword id="KW-0564">Palmitate</keyword>
<keyword id="KW-1185">Reference proteome</keyword>
<keyword id="KW-0732">Signal</keyword>
<keyword id="KW-0808">Transferase</keyword>
<proteinExistence type="inferred from homology"/>
<evidence type="ECO:0000250" key="1">
    <source>
        <dbReference type="UniProtKB" id="A5F5Y3"/>
    </source>
</evidence>
<evidence type="ECO:0000250" key="2">
    <source>
        <dbReference type="UniProtKB" id="O83774"/>
    </source>
</evidence>
<evidence type="ECO:0000250" key="3">
    <source>
        <dbReference type="UniProtKB" id="P0AB85"/>
    </source>
</evidence>
<evidence type="ECO:0000250" key="4">
    <source>
        <dbReference type="UniProtKB" id="P41780"/>
    </source>
</evidence>
<evidence type="ECO:0000255" key="5">
    <source>
        <dbReference type="PROSITE-ProRule" id="PRU00303"/>
    </source>
</evidence>
<evidence type="ECO:0000305" key="6"/>
<name>APBE_HAEIN</name>
<reference key="1">
    <citation type="journal article" date="1995" name="Science">
        <title>Whole-genome random sequencing and assembly of Haemophilus influenzae Rd.</title>
        <authorList>
            <person name="Fleischmann R.D."/>
            <person name="Adams M.D."/>
            <person name="White O."/>
            <person name="Clayton R.A."/>
            <person name="Kirkness E.F."/>
            <person name="Kerlavage A.R."/>
            <person name="Bult C.J."/>
            <person name="Tomb J.-F."/>
            <person name="Dougherty B.A."/>
            <person name="Merrick J.M."/>
            <person name="McKenney K."/>
            <person name="Sutton G.G."/>
            <person name="FitzHugh W."/>
            <person name="Fields C.A."/>
            <person name="Gocayne J.D."/>
            <person name="Scott J.D."/>
            <person name="Shirley R."/>
            <person name="Liu L.-I."/>
            <person name="Glodek A."/>
            <person name="Kelley J.M."/>
            <person name="Weidman J.F."/>
            <person name="Phillips C.A."/>
            <person name="Spriggs T."/>
            <person name="Hedblom E."/>
            <person name="Cotton M.D."/>
            <person name="Utterback T.R."/>
            <person name="Hanna M.C."/>
            <person name="Nguyen D.T."/>
            <person name="Saudek D.M."/>
            <person name="Brandon R.C."/>
            <person name="Fine L.D."/>
            <person name="Fritchman J.L."/>
            <person name="Fuhrmann J.L."/>
            <person name="Geoghagen N.S.M."/>
            <person name="Gnehm C.L."/>
            <person name="McDonald L.A."/>
            <person name="Small K.V."/>
            <person name="Fraser C.M."/>
            <person name="Smith H.O."/>
            <person name="Venter J.C."/>
        </authorList>
    </citation>
    <scope>NUCLEOTIDE SEQUENCE [LARGE SCALE GENOMIC DNA]</scope>
    <source>
        <strain>ATCC 51907 / DSM 11121 / KW20 / Rd</strain>
    </source>
</reference>
<comment type="function">
    <text evidence="1">Flavin transferase that catalyzes the transfer of the FMN moiety of FAD and its covalent binding to the hydroxyl group of a threonine residue in a target flavoprotein such as NqrB and NqrC, two subunits of the NQR complex.</text>
</comment>
<comment type="catalytic activity">
    <reaction evidence="1">
        <text>L-threonyl-[protein] + FAD = FMN-L-threonyl-[protein] + AMP + H(+)</text>
        <dbReference type="Rhea" id="RHEA:36847"/>
        <dbReference type="Rhea" id="RHEA-COMP:11060"/>
        <dbReference type="Rhea" id="RHEA-COMP:11061"/>
        <dbReference type="ChEBI" id="CHEBI:15378"/>
        <dbReference type="ChEBI" id="CHEBI:30013"/>
        <dbReference type="ChEBI" id="CHEBI:57692"/>
        <dbReference type="ChEBI" id="CHEBI:74257"/>
        <dbReference type="ChEBI" id="CHEBI:456215"/>
        <dbReference type="EC" id="2.7.1.180"/>
    </reaction>
</comment>
<comment type="cofactor">
    <cofactor evidence="1">
        <name>Mg(2+)</name>
        <dbReference type="ChEBI" id="CHEBI:18420"/>
    </cofactor>
</comment>
<comment type="subcellular location">
    <subcellularLocation>
        <location evidence="4 5">Cell inner membrane</location>
        <topology evidence="4 5">Lipid-anchor</topology>
        <orientation evidence="4">Periplasmic side</orientation>
    </subcellularLocation>
</comment>
<comment type="similarity">
    <text evidence="6">Belongs to the ApbE family.</text>
</comment>
<feature type="signal peptide" evidence="5">
    <location>
        <begin position="1"/>
        <end position="19"/>
    </location>
</feature>
<feature type="chain" id="PRO_0000001749" description="FAD:protein FMN transferase">
    <location>
        <begin position="20"/>
        <end position="346"/>
    </location>
</feature>
<feature type="binding site" evidence="4">
    <location>
        <position position="34"/>
    </location>
    <ligand>
        <name>FAD</name>
        <dbReference type="ChEBI" id="CHEBI:57692"/>
    </ligand>
</feature>
<feature type="binding site" evidence="4">
    <location>
        <position position="73"/>
    </location>
    <ligand>
        <name>FAD</name>
        <dbReference type="ChEBI" id="CHEBI:57692"/>
    </ligand>
</feature>
<feature type="binding site" evidence="4">
    <location>
        <begin position="115"/>
        <end position="117"/>
    </location>
    <ligand>
        <name>FAD</name>
        <dbReference type="ChEBI" id="CHEBI:57692"/>
    </ligand>
</feature>
<feature type="binding site" evidence="4">
    <location>
        <position position="177"/>
    </location>
    <ligand>
        <name>FAD</name>
        <dbReference type="ChEBI" id="CHEBI:57692"/>
    </ligand>
</feature>
<feature type="binding site" evidence="3">
    <location>
        <position position="180"/>
    </location>
    <ligand>
        <name>Mg(2+)</name>
        <dbReference type="ChEBI" id="CHEBI:18420"/>
    </ligand>
</feature>
<feature type="binding site" evidence="2">
    <location>
        <position position="183"/>
    </location>
    <ligand>
        <name>FAD</name>
        <dbReference type="ChEBI" id="CHEBI:57692"/>
    </ligand>
</feature>
<feature type="binding site" evidence="4">
    <location>
        <position position="269"/>
    </location>
    <ligand>
        <name>FAD</name>
        <dbReference type="ChEBI" id="CHEBI:57692"/>
    </ligand>
</feature>
<feature type="binding site" evidence="2">
    <location>
        <position position="295"/>
    </location>
    <ligand>
        <name>Mg(2+)</name>
        <dbReference type="ChEBI" id="CHEBI:18420"/>
    </ligand>
</feature>
<feature type="binding site" evidence="2">
    <location>
        <position position="299"/>
    </location>
    <ligand>
        <name>Mg(2+)</name>
        <dbReference type="ChEBI" id="CHEBI:18420"/>
    </ligand>
</feature>
<feature type="lipid moiety-binding region" description="N-palmitoyl cysteine" evidence="5">
    <location>
        <position position="20"/>
    </location>
</feature>
<feature type="lipid moiety-binding region" description="S-diacylglycerol cysteine" evidence="5">
    <location>
        <position position="20"/>
    </location>
</feature>
<gene>
    <name type="primary">apbE</name>
    <name type="ordered locus">HI_0172</name>
</gene>
<accession>P44550</accession>
<organism>
    <name type="scientific">Haemophilus influenzae (strain ATCC 51907 / DSM 11121 / KW20 / Rd)</name>
    <dbReference type="NCBI Taxonomy" id="71421"/>
    <lineage>
        <taxon>Bacteria</taxon>
        <taxon>Pseudomonadati</taxon>
        <taxon>Pseudomonadota</taxon>
        <taxon>Gammaproteobacteria</taxon>
        <taxon>Pasteurellales</taxon>
        <taxon>Pasteurellaceae</taxon>
        <taxon>Haemophilus</taxon>
    </lineage>
</organism>
<protein>
    <recommendedName>
        <fullName evidence="1">FAD:protein FMN transferase</fullName>
        <ecNumber evidence="1">2.7.1.180</ecNumber>
    </recommendedName>
    <alternativeName>
        <fullName evidence="1">Flavin transferase</fullName>
    </alternativeName>
</protein>